<evidence type="ECO:0000255" key="1">
    <source>
        <dbReference type="PROSITE-ProRule" id="PRU00108"/>
    </source>
</evidence>
<evidence type="ECO:0000256" key="2">
    <source>
        <dbReference type="SAM" id="MobiDB-lite"/>
    </source>
</evidence>
<evidence type="ECO:0000269" key="3">
    <source>
    </source>
</evidence>
<evidence type="ECO:0000305" key="4"/>
<proteinExistence type="evidence at transcript level"/>
<organism>
    <name type="scientific">Xenopus laevis</name>
    <name type="common">African clawed frog</name>
    <dbReference type="NCBI Taxonomy" id="8355"/>
    <lineage>
        <taxon>Eukaryota</taxon>
        <taxon>Metazoa</taxon>
        <taxon>Chordata</taxon>
        <taxon>Craniata</taxon>
        <taxon>Vertebrata</taxon>
        <taxon>Euteleostomi</taxon>
        <taxon>Amphibia</taxon>
        <taxon>Batrachia</taxon>
        <taxon>Anura</taxon>
        <taxon>Pipoidea</taxon>
        <taxon>Pipidae</taxon>
        <taxon>Xenopodinae</taxon>
        <taxon>Xenopus</taxon>
        <taxon>Xenopus</taxon>
    </lineage>
</organism>
<name>DBX1_XENLA</name>
<comment type="function">
    <text evidence="3">May function within the midpoint progenitor population to inhibit neuronal differentiation, possibly through modulating the function of Xash3.</text>
</comment>
<comment type="subcellular location">
    <subcellularLocation>
        <location evidence="1">Nucleus</location>
    </subcellularLocation>
</comment>
<comment type="developmental stage">
    <text evidence="3">First detected in neural plate stage embryos within two domains. In anterior regions of the embryo, expression is detected within a zone at the midline of the neural plate while, in posterior regions, it is expressed in a bilaterally symmetric stripe that lies at the middle of the mediolateral axis. This pattern of expression is maintained throughout neural fold stages of development. Following neural tube closure, expression is maintained in posterior regions of the embryo at the midpoint of the dorsoventral axis of the neural tube. The expression domain apparent at the anterior midline of the neural plate, the presumptive ventral region of the neural tube, is not detectable following neural tube closure. At stages intermediate to stage 20 and stage 28, an anteroposterior striped pattern appears within anterior regions of the embryo. By stage 28, these stripes have coalesced to yield a uniform zone of expression. In anterior regions, expression is largely specific to the dorsal neural tube. Expression in more posterior regions of the embryo remains specific to the midpoint of the dorsoventral axis. This midpoint expression is restricted to the ventricular zone.</text>
</comment>
<comment type="similarity">
    <text evidence="4">Belongs to the H2.0 homeobox family.</text>
</comment>
<sequence length="331" mass="36684">MMFPSLLAPPAVYPNLLRPTPTLTLPQSIQTALSNHTSFLIEDLIRISRPAGFLPRAVPPPSMSPPTSESPNCMSETSDLARREGPNQTSISSNNSSPFLKFGVNAILSSSPRTESAQVLLPSAHPKPFTFPYFEGSFQPFIRSSYFPASSSVVPIPGTFSWPLVARGKPRRGMLRRAVFSDVQRKALEKMFQKQKYISKPDRKKLAGKLGLKDSQVKIWFQNRRMKWRNSKERELLSSGGCREQTLPTKFNPHPDLSDVSKKSSGEGEEEPLCPGNSPAHALPYQCPEHHLRLDTQLPSSPFNSSSASKPSDFSDSEEEGGEQEEEITVS</sequence>
<dbReference type="EMBL" id="AF253504">
    <property type="protein sequence ID" value="AAF67735.1"/>
    <property type="molecule type" value="mRNA"/>
</dbReference>
<dbReference type="RefSeq" id="NP_001079210.1">
    <property type="nucleotide sequence ID" value="NM_001085741.1"/>
</dbReference>
<dbReference type="SMR" id="Q9I9H2"/>
<dbReference type="GeneID" id="373822"/>
<dbReference type="KEGG" id="xla:373822"/>
<dbReference type="AGR" id="Xenbase:XB-GENE-865351"/>
<dbReference type="CTD" id="373822"/>
<dbReference type="Xenbase" id="XB-GENE-865351">
    <property type="gene designation" value="dbx1.S"/>
</dbReference>
<dbReference type="OMA" id="RHSLAYH"/>
<dbReference type="OrthoDB" id="10048112at2759"/>
<dbReference type="Proteomes" id="UP000186698">
    <property type="component" value="Chromosome 4S"/>
</dbReference>
<dbReference type="Bgee" id="373822">
    <property type="expression patterns" value="Expressed in neurula embryo and 1 other cell type or tissue"/>
</dbReference>
<dbReference type="GO" id="GO:0005634">
    <property type="term" value="C:nucleus"/>
    <property type="evidence" value="ECO:0007669"/>
    <property type="project" value="UniProtKB-SubCell"/>
</dbReference>
<dbReference type="GO" id="GO:0003677">
    <property type="term" value="F:DNA binding"/>
    <property type="evidence" value="ECO:0007669"/>
    <property type="project" value="UniProtKB-KW"/>
</dbReference>
<dbReference type="GO" id="GO:0000981">
    <property type="term" value="F:DNA-binding transcription factor activity, RNA polymerase II-specific"/>
    <property type="evidence" value="ECO:0007669"/>
    <property type="project" value="InterPro"/>
</dbReference>
<dbReference type="GO" id="GO:0021515">
    <property type="term" value="P:cell differentiation in spinal cord"/>
    <property type="evidence" value="ECO:0000318"/>
    <property type="project" value="GO_Central"/>
</dbReference>
<dbReference type="GO" id="GO:0006357">
    <property type="term" value="P:regulation of transcription by RNA polymerase II"/>
    <property type="evidence" value="ECO:0000318"/>
    <property type="project" value="GO_Central"/>
</dbReference>
<dbReference type="CDD" id="cd00086">
    <property type="entry name" value="homeodomain"/>
    <property type="match status" value="1"/>
</dbReference>
<dbReference type="FunFam" id="1.10.10.60:FF:000177">
    <property type="entry name" value="Homeobox protein DBX1"/>
    <property type="match status" value="1"/>
</dbReference>
<dbReference type="Gene3D" id="1.10.10.60">
    <property type="entry name" value="Homeodomain-like"/>
    <property type="match status" value="1"/>
</dbReference>
<dbReference type="InterPro" id="IPR051662">
    <property type="entry name" value="H2.0_Homeobox_NeuralPatt"/>
</dbReference>
<dbReference type="InterPro" id="IPR001356">
    <property type="entry name" value="HD"/>
</dbReference>
<dbReference type="InterPro" id="IPR020479">
    <property type="entry name" value="HD_metazoa"/>
</dbReference>
<dbReference type="InterPro" id="IPR017970">
    <property type="entry name" value="Homeobox_CS"/>
</dbReference>
<dbReference type="InterPro" id="IPR009057">
    <property type="entry name" value="Homeodomain-like_sf"/>
</dbReference>
<dbReference type="InterPro" id="IPR000047">
    <property type="entry name" value="HTH_motif"/>
</dbReference>
<dbReference type="PANTHER" id="PTHR24331">
    <property type="entry name" value="DBX"/>
    <property type="match status" value="1"/>
</dbReference>
<dbReference type="PANTHER" id="PTHR24331:SF6">
    <property type="entry name" value="HOMEOBOX PROTEIN DBX1"/>
    <property type="match status" value="1"/>
</dbReference>
<dbReference type="Pfam" id="PF00046">
    <property type="entry name" value="Homeodomain"/>
    <property type="match status" value="1"/>
</dbReference>
<dbReference type="PRINTS" id="PR00024">
    <property type="entry name" value="HOMEOBOX"/>
</dbReference>
<dbReference type="PRINTS" id="PR00031">
    <property type="entry name" value="HTHREPRESSR"/>
</dbReference>
<dbReference type="SMART" id="SM00389">
    <property type="entry name" value="HOX"/>
    <property type="match status" value="1"/>
</dbReference>
<dbReference type="SUPFAM" id="SSF46689">
    <property type="entry name" value="Homeodomain-like"/>
    <property type="match status" value="1"/>
</dbReference>
<dbReference type="PROSITE" id="PS00027">
    <property type="entry name" value="HOMEOBOX_1"/>
    <property type="match status" value="1"/>
</dbReference>
<dbReference type="PROSITE" id="PS50071">
    <property type="entry name" value="HOMEOBOX_2"/>
    <property type="match status" value="1"/>
</dbReference>
<keyword id="KW-0217">Developmental protein</keyword>
<keyword id="KW-0238">DNA-binding</keyword>
<keyword id="KW-0371">Homeobox</keyword>
<keyword id="KW-0539">Nucleus</keyword>
<keyword id="KW-1185">Reference proteome</keyword>
<feature type="chain" id="PRO_0000302847" description="Homeobox protein DBX1">
    <location>
        <begin position="1"/>
        <end position="331"/>
    </location>
</feature>
<feature type="DNA-binding region" description="Homeobox" evidence="1">
    <location>
        <begin position="173"/>
        <end position="232"/>
    </location>
</feature>
<feature type="region of interest" description="Disordered" evidence="2">
    <location>
        <begin position="56"/>
        <end position="94"/>
    </location>
</feature>
<feature type="region of interest" description="Disordered" evidence="2">
    <location>
        <begin position="232"/>
        <end position="331"/>
    </location>
</feature>
<feature type="compositionally biased region" description="Basic and acidic residues" evidence="2">
    <location>
        <begin position="256"/>
        <end position="266"/>
    </location>
</feature>
<feature type="compositionally biased region" description="Low complexity" evidence="2">
    <location>
        <begin position="299"/>
        <end position="314"/>
    </location>
</feature>
<feature type="compositionally biased region" description="Acidic residues" evidence="2">
    <location>
        <begin position="315"/>
        <end position="331"/>
    </location>
</feature>
<protein>
    <recommendedName>
        <fullName>Homeobox protein DBX1</fullName>
    </recommendedName>
    <alternativeName>
        <fullName>Developing brain homeobox protein 1</fullName>
    </alternativeName>
    <alternativeName>
        <fullName>Xdbx</fullName>
    </alternativeName>
</protein>
<reference key="1">
    <citation type="journal article" date="2000" name="Development">
        <title>The homeodomain-containing gene Xdbx inhibits neuronal differentiation in the developing embryo.</title>
        <authorList>
            <person name="Gershon A.A."/>
            <person name="Rudnick J."/>
            <person name="Kalam L."/>
            <person name="Zimmerman K."/>
        </authorList>
    </citation>
    <scope>NUCLEOTIDE SEQUENCE [MRNA]</scope>
    <scope>FUNCTION</scope>
    <scope>DEVELOPMENTAL STAGE</scope>
</reference>
<accession>Q9I9H2</accession>
<gene>
    <name type="primary">dbx1</name>
</gene>